<organism>
    <name type="scientific">Methylibium petroleiphilum (strain ATCC BAA-1232 / LMG 22953 / PM1)</name>
    <dbReference type="NCBI Taxonomy" id="420662"/>
    <lineage>
        <taxon>Bacteria</taxon>
        <taxon>Pseudomonadati</taxon>
        <taxon>Pseudomonadota</taxon>
        <taxon>Betaproteobacteria</taxon>
        <taxon>Burkholderiales</taxon>
        <taxon>Sphaerotilaceae</taxon>
        <taxon>Methylibium</taxon>
    </lineage>
</organism>
<accession>A2SLD0</accession>
<feature type="chain" id="PRO_1000055870" description="Large ribosomal subunit protein bL17">
    <location>
        <begin position="1"/>
        <end position="131"/>
    </location>
</feature>
<dbReference type="EMBL" id="CP000555">
    <property type="protein sequence ID" value="ABM96369.1"/>
    <property type="molecule type" value="Genomic_DNA"/>
</dbReference>
<dbReference type="RefSeq" id="WP_011830990.1">
    <property type="nucleotide sequence ID" value="NC_008825.1"/>
</dbReference>
<dbReference type="SMR" id="A2SLD0"/>
<dbReference type="STRING" id="420662.Mpe_A3416"/>
<dbReference type="KEGG" id="mpt:Mpe_A3416"/>
<dbReference type="eggNOG" id="COG0203">
    <property type="taxonomic scope" value="Bacteria"/>
</dbReference>
<dbReference type="HOGENOM" id="CLU_074407_2_0_4"/>
<dbReference type="Proteomes" id="UP000000366">
    <property type="component" value="Chromosome"/>
</dbReference>
<dbReference type="GO" id="GO:0022625">
    <property type="term" value="C:cytosolic large ribosomal subunit"/>
    <property type="evidence" value="ECO:0007669"/>
    <property type="project" value="TreeGrafter"/>
</dbReference>
<dbReference type="GO" id="GO:0003735">
    <property type="term" value="F:structural constituent of ribosome"/>
    <property type="evidence" value="ECO:0007669"/>
    <property type="project" value="InterPro"/>
</dbReference>
<dbReference type="GO" id="GO:0006412">
    <property type="term" value="P:translation"/>
    <property type="evidence" value="ECO:0007669"/>
    <property type="project" value="UniProtKB-UniRule"/>
</dbReference>
<dbReference type="FunFam" id="3.90.1030.10:FF:000001">
    <property type="entry name" value="50S ribosomal protein L17"/>
    <property type="match status" value="1"/>
</dbReference>
<dbReference type="Gene3D" id="3.90.1030.10">
    <property type="entry name" value="Ribosomal protein L17"/>
    <property type="match status" value="1"/>
</dbReference>
<dbReference type="HAMAP" id="MF_01368">
    <property type="entry name" value="Ribosomal_bL17"/>
    <property type="match status" value="1"/>
</dbReference>
<dbReference type="InterPro" id="IPR000456">
    <property type="entry name" value="Ribosomal_bL17"/>
</dbReference>
<dbReference type="InterPro" id="IPR047859">
    <property type="entry name" value="Ribosomal_bL17_CS"/>
</dbReference>
<dbReference type="InterPro" id="IPR036373">
    <property type="entry name" value="Ribosomal_bL17_sf"/>
</dbReference>
<dbReference type="NCBIfam" id="TIGR00059">
    <property type="entry name" value="L17"/>
    <property type="match status" value="1"/>
</dbReference>
<dbReference type="PANTHER" id="PTHR14413:SF16">
    <property type="entry name" value="LARGE RIBOSOMAL SUBUNIT PROTEIN BL17M"/>
    <property type="match status" value="1"/>
</dbReference>
<dbReference type="PANTHER" id="PTHR14413">
    <property type="entry name" value="RIBOSOMAL PROTEIN L17"/>
    <property type="match status" value="1"/>
</dbReference>
<dbReference type="Pfam" id="PF01196">
    <property type="entry name" value="Ribosomal_L17"/>
    <property type="match status" value="1"/>
</dbReference>
<dbReference type="SUPFAM" id="SSF64263">
    <property type="entry name" value="Prokaryotic ribosomal protein L17"/>
    <property type="match status" value="1"/>
</dbReference>
<dbReference type="PROSITE" id="PS01167">
    <property type="entry name" value="RIBOSOMAL_L17"/>
    <property type="match status" value="1"/>
</dbReference>
<comment type="subunit">
    <text evidence="1">Part of the 50S ribosomal subunit. Contacts protein L32.</text>
</comment>
<comment type="similarity">
    <text evidence="1">Belongs to the bacterial ribosomal protein bL17 family.</text>
</comment>
<proteinExistence type="inferred from homology"/>
<evidence type="ECO:0000255" key="1">
    <source>
        <dbReference type="HAMAP-Rule" id="MF_01368"/>
    </source>
</evidence>
<evidence type="ECO:0000305" key="2"/>
<keyword id="KW-1185">Reference proteome</keyword>
<keyword id="KW-0687">Ribonucleoprotein</keyword>
<keyword id="KW-0689">Ribosomal protein</keyword>
<name>RL17_METPP</name>
<gene>
    <name evidence="1" type="primary">rplQ</name>
    <name type="ordered locus">Mpe_A3416</name>
</gene>
<protein>
    <recommendedName>
        <fullName evidence="1">Large ribosomal subunit protein bL17</fullName>
    </recommendedName>
    <alternativeName>
        <fullName evidence="2">50S ribosomal protein L17</fullName>
    </alternativeName>
</protein>
<sequence>MRHRHGLRKLNRTSEHRLAMLRNMANSLIQSEAIKTTVPKAKELRRVVEPLITLAKEPTLANRRLAFDRTRDRDVVAKLFNDLGPRYKARPGGYTRILKMGFRVGDNAPMAFVELVDRPEPAAQAPAEATE</sequence>
<reference key="1">
    <citation type="journal article" date="2007" name="J. Bacteriol.">
        <title>Whole-genome analysis of the methyl tert-butyl ether-degrading beta-proteobacterium Methylibium petroleiphilum PM1.</title>
        <authorList>
            <person name="Kane S.R."/>
            <person name="Chakicherla A.Y."/>
            <person name="Chain P.S.G."/>
            <person name="Schmidt R."/>
            <person name="Shin M.W."/>
            <person name="Legler T.C."/>
            <person name="Scow K.M."/>
            <person name="Larimer F.W."/>
            <person name="Lucas S.M."/>
            <person name="Richardson P.M."/>
            <person name="Hristova K.R."/>
        </authorList>
    </citation>
    <scope>NUCLEOTIDE SEQUENCE [LARGE SCALE GENOMIC DNA]</scope>
    <source>
        <strain>ATCC BAA-1232 / LMG 22953 / PM1</strain>
    </source>
</reference>